<proteinExistence type="inferred from homology"/>
<dbReference type="EMBL" id="BA000002">
    <property type="protein sequence ID" value="BAF34737.1"/>
    <property type="molecule type" value="Genomic_DNA"/>
</dbReference>
<dbReference type="RefSeq" id="WP_010865827.1">
    <property type="nucleotide sequence ID" value="NC_000854.2"/>
</dbReference>
<dbReference type="SMR" id="P58077"/>
<dbReference type="STRING" id="272557.APE_0546a"/>
<dbReference type="EnsemblBacteria" id="BAF34737">
    <property type="protein sequence ID" value="BAF34737"/>
    <property type="gene ID" value="APE_0546a"/>
</dbReference>
<dbReference type="GeneID" id="1445547"/>
<dbReference type="KEGG" id="ape:APE_0546a"/>
<dbReference type="PATRIC" id="fig|272557.25.peg.412"/>
<dbReference type="eggNOG" id="arCOG04129">
    <property type="taxonomic scope" value="Archaea"/>
</dbReference>
<dbReference type="Proteomes" id="UP000002518">
    <property type="component" value="Chromosome"/>
</dbReference>
<dbReference type="GO" id="GO:1990904">
    <property type="term" value="C:ribonucleoprotein complex"/>
    <property type="evidence" value="ECO:0007669"/>
    <property type="project" value="UniProtKB-KW"/>
</dbReference>
<dbReference type="GO" id="GO:0005840">
    <property type="term" value="C:ribosome"/>
    <property type="evidence" value="ECO:0007669"/>
    <property type="project" value="UniProtKB-KW"/>
</dbReference>
<dbReference type="GO" id="GO:0003735">
    <property type="term" value="F:structural constituent of ribosome"/>
    <property type="evidence" value="ECO:0007669"/>
    <property type="project" value="InterPro"/>
</dbReference>
<dbReference type="GO" id="GO:0006412">
    <property type="term" value="P:translation"/>
    <property type="evidence" value="ECO:0007669"/>
    <property type="project" value="UniProtKB-UniRule"/>
</dbReference>
<dbReference type="FunFam" id="2.30.30.70:FF:000001">
    <property type="entry name" value="60S ribosomal protein L21"/>
    <property type="match status" value="1"/>
</dbReference>
<dbReference type="Gene3D" id="2.30.30.70">
    <property type="entry name" value="Ribosomal protein L21"/>
    <property type="match status" value="1"/>
</dbReference>
<dbReference type="HAMAP" id="MF_00369">
    <property type="entry name" value="Ribosomal_eL21"/>
    <property type="match status" value="1"/>
</dbReference>
<dbReference type="InterPro" id="IPR001147">
    <property type="entry name" value="Ribosomal_eL21"/>
</dbReference>
<dbReference type="InterPro" id="IPR022856">
    <property type="entry name" value="Ribosomal_eL21_arc"/>
</dbReference>
<dbReference type="InterPro" id="IPR018259">
    <property type="entry name" value="Ribosomal_eL21_CS"/>
</dbReference>
<dbReference type="InterPro" id="IPR036948">
    <property type="entry name" value="Ribosomal_eL21_sf"/>
</dbReference>
<dbReference type="InterPro" id="IPR008991">
    <property type="entry name" value="Translation_prot_SH3-like_sf"/>
</dbReference>
<dbReference type="NCBIfam" id="NF003303">
    <property type="entry name" value="PRK04306.1"/>
    <property type="match status" value="1"/>
</dbReference>
<dbReference type="PANTHER" id="PTHR20981">
    <property type="entry name" value="60S RIBOSOMAL PROTEIN L21"/>
    <property type="match status" value="1"/>
</dbReference>
<dbReference type="Pfam" id="PF01157">
    <property type="entry name" value="Ribosomal_L21e"/>
    <property type="match status" value="1"/>
</dbReference>
<dbReference type="SUPFAM" id="SSF50104">
    <property type="entry name" value="Translation proteins SH3-like domain"/>
    <property type="match status" value="1"/>
</dbReference>
<dbReference type="PROSITE" id="PS01171">
    <property type="entry name" value="RIBOSOMAL_L21E"/>
    <property type="match status" value="1"/>
</dbReference>
<accession>P58077</accession>
<accession>Q05E64</accession>
<name>RL21_AERPE</name>
<reference key="1">
    <citation type="journal article" date="1999" name="DNA Res.">
        <title>Complete genome sequence of an aerobic hyper-thermophilic crenarchaeon, Aeropyrum pernix K1.</title>
        <authorList>
            <person name="Kawarabayasi Y."/>
            <person name="Hino Y."/>
            <person name="Horikawa H."/>
            <person name="Yamazaki S."/>
            <person name="Haikawa Y."/>
            <person name="Jin-no K."/>
            <person name="Takahashi M."/>
            <person name="Sekine M."/>
            <person name="Baba S."/>
            <person name="Ankai A."/>
            <person name="Kosugi H."/>
            <person name="Hosoyama A."/>
            <person name="Fukui S."/>
            <person name="Nagai Y."/>
            <person name="Nishijima K."/>
            <person name="Nakazawa H."/>
            <person name="Takamiya M."/>
            <person name="Masuda S."/>
            <person name="Funahashi T."/>
            <person name="Tanaka T."/>
            <person name="Kudoh Y."/>
            <person name="Yamazaki J."/>
            <person name="Kushida N."/>
            <person name="Oguchi A."/>
            <person name="Aoki K."/>
            <person name="Kubota K."/>
            <person name="Nakamura Y."/>
            <person name="Nomura N."/>
            <person name="Sako Y."/>
            <person name="Kikuchi H."/>
        </authorList>
    </citation>
    <scope>NUCLEOTIDE SEQUENCE [LARGE SCALE GENOMIC DNA]</scope>
    <source>
        <strain>ATCC 700893 / DSM 11879 / JCM 9820 / NBRC 100138 / K1</strain>
    </source>
</reference>
<reference key="2">
    <citation type="unpublished observations" date="2001-05">
        <authorList>
            <person name="Medigue C."/>
            <person name="Bocs S."/>
        </authorList>
    </citation>
    <scope>IDENTIFICATION</scope>
</reference>
<sequence>MVKAPRGYRNRTRRLLRKPVREKGSIPRLSTYLREYRVGDKVAIIINPSFPDWGMPHRRFHGLTGTVVGKRGEAYEVEVYLGRKRKTLFVPPVHLKPLSTAAERRGS</sequence>
<gene>
    <name type="primary">rpl21e</name>
    <name type="ordered locus">APE_0548.1</name>
</gene>
<protein>
    <recommendedName>
        <fullName evidence="1">Large ribosomal subunit protein eL21</fullName>
    </recommendedName>
    <alternativeName>
        <fullName>50S ribosomal protein L21e</fullName>
    </alternativeName>
</protein>
<feature type="chain" id="PRO_0000149684" description="Large ribosomal subunit protein eL21">
    <location>
        <begin position="1"/>
        <end position="107"/>
    </location>
</feature>
<keyword id="KW-1185">Reference proteome</keyword>
<keyword id="KW-0687">Ribonucleoprotein</keyword>
<keyword id="KW-0689">Ribosomal protein</keyword>
<evidence type="ECO:0000305" key="1"/>
<organism>
    <name type="scientific">Aeropyrum pernix (strain ATCC 700893 / DSM 11879 / JCM 9820 / NBRC 100138 / K1)</name>
    <dbReference type="NCBI Taxonomy" id="272557"/>
    <lineage>
        <taxon>Archaea</taxon>
        <taxon>Thermoproteota</taxon>
        <taxon>Thermoprotei</taxon>
        <taxon>Desulfurococcales</taxon>
        <taxon>Desulfurococcaceae</taxon>
        <taxon>Aeropyrum</taxon>
    </lineage>
</organism>
<comment type="similarity">
    <text evidence="1">Belongs to the eukaryotic ribosomal protein eL21 family.</text>
</comment>